<proteinExistence type="evidence at protein level"/>
<sequence>MSTVHEILCKLSLEGDHSTPPSAYGSVKPYTNFDAERDALNIETAVKTKGVDEVTIVNILTNRSNVQRQDIAFAYQRRTKKELPSALKSALSGHLETVILGLLKTPAQYDASELKASMKGLGTDEDSLIEIICSRTNQELQEINRVYKEMYKTDLEKDIISDTSGDFRKLMVALAKGRRAEDGSVIDYELIDQDARELYDAGVKRKGTDVPKWISIMTERSVCHLQKVFERYKSYSPYDMLESIKKEVKGDLENAFLNLVQCIQNKPLYFADRLYDSMKGKGTRDKVLIRIMVSRSEVDMLKIRSEFKRKYGKSLYYYIQQDTKGDYQKALLYLCGGDD</sequence>
<protein>
    <recommendedName>
        <fullName evidence="19 20">Annexin A2</fullName>
    </recommendedName>
    <alternativeName>
        <fullName evidence="18">Annexin II</fullName>
    </alternativeName>
    <alternativeName>
        <fullName>Annexin-2</fullName>
    </alternativeName>
    <alternativeName>
        <fullName>Calpactin I heavy chain</fullName>
    </alternativeName>
    <alternativeName>
        <fullName>Calpactin-1 heavy chain</fullName>
    </alternativeName>
    <alternativeName>
        <fullName>Chromobindin-8</fullName>
    </alternativeName>
    <alternativeName>
        <fullName>Lipocortin II</fullName>
    </alternativeName>
    <alternativeName>
        <fullName>Placental anticoagulant protein IV</fullName>
        <shortName>PAP-IV</shortName>
    </alternativeName>
    <alternativeName>
        <fullName>Protein I</fullName>
    </alternativeName>
    <alternativeName>
        <fullName>p36</fullName>
    </alternativeName>
</protein>
<name>ANXA2_MOUSE</name>
<reference key="1">
    <citation type="journal article" date="1986" name="Cell">
        <title>The cDNA sequence for the protein-tyrosine kinase substrate p36 (calpactin I heavy chain) reveals a multidomain protein with internal repeats.</title>
        <authorList>
            <person name="Saris C.J.M."/>
            <person name="Tack B.F."/>
            <person name="Kristensen T."/>
            <person name="Glenney J.R. Jr."/>
            <person name="Hunter T."/>
        </authorList>
    </citation>
    <scope>NUCLEOTIDE SEQUENCE [MRNA]</scope>
</reference>
<reference key="2">
    <citation type="journal article" date="2004" name="Genome Res.">
        <title>The status, quality, and expansion of the NIH full-length cDNA project: the Mammalian Gene Collection (MGC).</title>
        <authorList>
            <consortium name="The MGC Project Team"/>
        </authorList>
    </citation>
    <scope>NUCLEOTIDE SEQUENCE [LARGE SCALE MRNA]</scope>
</reference>
<reference key="3">
    <citation type="journal article" date="1990" name="Biochemistry">
        <title>Structure and chromosome assignment of the murine p36 (calpactin I heavy chain) gene.</title>
        <authorList>
            <person name="Amiguet P."/>
            <person name="D'Eustachio P."/>
            <person name="Kristensen T."/>
            <person name="Wetsel R.A."/>
            <person name="Saris C.J.M."/>
            <person name="Hunter T."/>
            <person name="Chaplin D.D."/>
            <person name="Tack B.F."/>
        </authorList>
    </citation>
    <scope>NUCLEOTIDE SEQUENCE [GENOMIC DNA] OF 1-16 AND 322-339</scope>
</reference>
<reference key="4">
    <citation type="journal article" date="1996" name="Biochim. Biophys. Acta">
        <title>Complete structure of the murine p36 (annexin II) gene. Identification of mRNAs for both the murine and the human gene with alternatively spliced 5' noncoding exons.</title>
        <authorList>
            <person name="Fey M.F."/>
            <person name="Moffat G.J."/>
            <person name="Vik D.P."/>
            <person name="Meisenhelder J."/>
            <person name="Saris C.J."/>
            <person name="Hunter T."/>
            <person name="Tack B.F."/>
        </authorList>
    </citation>
    <scope>NUCLEOTIDE SEQUENCE [GENOMIC DNA] OF 1-16</scope>
</reference>
<reference key="5">
    <citation type="journal article" date="2003" name="J. Biol. Chem.">
        <title>Dysferlin interacts with annexins A1 and A2 and mediates sarcolemmal wound-healing.</title>
        <authorList>
            <person name="Lennon N.J."/>
            <person name="Kho A."/>
            <person name="Bacskai B.J."/>
            <person name="Perlmutter S.L."/>
            <person name="Hyman B.T."/>
            <person name="Brown R.H. Jr."/>
        </authorList>
    </citation>
    <scope>INTERACTION WITH DYSF</scope>
</reference>
<reference key="6">
    <citation type="journal article" date="2004" name="J. Clin. Invest.">
        <title>Annexin II regulates fibrin homeostasis and neoangiogenesis in vivo.</title>
        <authorList>
            <person name="Ling Q."/>
            <person name="Jacovina A.T."/>
            <person name="Deora A."/>
            <person name="Febbraio M."/>
            <person name="Simantov R."/>
            <person name="Silverstein R.L."/>
            <person name="Hempstead B."/>
            <person name="Mark W.H."/>
            <person name="Hajjar K.A."/>
        </authorList>
    </citation>
    <scope>FUNCTION</scope>
    <scope>DISRUPTION PHENOTYPE</scope>
</reference>
<reference key="7">
    <citation type="journal article" date="2005" name="Biochem. Biophys. Res. Commun.">
        <title>Proteomic identification of proteins conjugated to ISG15 in mouse and human cells.</title>
        <authorList>
            <person name="Giannakopoulos N.V."/>
            <person name="Luo J.K."/>
            <person name="Papov V."/>
            <person name="Zou W."/>
            <person name="Lenschow D.J."/>
            <person name="Jacobs B.S."/>
            <person name="Borden E.C."/>
            <person name="Li J."/>
            <person name="Virgin H.W."/>
            <person name="Zhang D.E."/>
        </authorList>
    </citation>
    <scope>ISGYLATION</scope>
</reference>
<reference key="8">
    <citation type="journal article" date="2005" name="Nat. Biotechnol.">
        <title>Immunoaffinity profiling of tyrosine phosphorylation in cancer cells.</title>
        <authorList>
            <person name="Rush J."/>
            <person name="Moritz A."/>
            <person name="Lee K.A."/>
            <person name="Guo A."/>
            <person name="Goss V.L."/>
            <person name="Spek E.J."/>
            <person name="Zhang H."/>
            <person name="Zha X.-M."/>
            <person name="Polakiewicz R.D."/>
            <person name="Comb M.J."/>
        </authorList>
    </citation>
    <scope>IDENTIFICATION BY MASS SPECTROMETRY [LARGE SCALE ANALYSIS]</scope>
</reference>
<reference key="9">
    <citation type="journal article" date="2009" name="Immunity">
        <title>The phagosomal proteome in interferon-gamma-activated macrophages.</title>
        <authorList>
            <person name="Trost M."/>
            <person name="English L."/>
            <person name="Lemieux S."/>
            <person name="Courcelles M."/>
            <person name="Desjardins M."/>
            <person name="Thibault P."/>
        </authorList>
    </citation>
    <scope>PHOSPHORYLATION [LARGE SCALE ANALYSIS] AT TYR-199</scope>
    <scope>IDENTIFICATION BY MASS SPECTROMETRY [LARGE SCALE ANALYSIS]</scope>
</reference>
<reference key="10">
    <citation type="journal article" date="2010" name="Cell">
        <title>A tissue-specific atlas of mouse protein phosphorylation and expression.</title>
        <authorList>
            <person name="Huttlin E.L."/>
            <person name="Jedrychowski M.P."/>
            <person name="Elias J.E."/>
            <person name="Goswami T."/>
            <person name="Rad R."/>
            <person name="Beausoleil S.A."/>
            <person name="Villen J."/>
            <person name="Haas W."/>
            <person name="Sowa M.E."/>
            <person name="Gygi S.P."/>
        </authorList>
    </citation>
    <scope>IDENTIFICATION BY MASS SPECTROMETRY [LARGE SCALE ANALYSIS]</scope>
    <source>
        <tissue>Brain</tissue>
        <tissue>Brown adipose tissue</tissue>
        <tissue>Heart</tissue>
        <tissue>Kidney</tissue>
        <tissue>Liver</tissue>
        <tissue>Lung</tissue>
        <tissue>Pancreas</tissue>
        <tissue>Spleen</tissue>
        <tissue>Testis</tissue>
    </source>
</reference>
<reference key="11">
    <citation type="journal article" date="2011" name="Traffic">
        <title>Biochemical characterization of APPL endosomes: the role of annexin A2 in APPL membrane recruitment.</title>
        <authorList>
            <person name="Urbanska A."/>
            <person name="Sadowski L."/>
            <person name="Kalaidzidis Y."/>
            <person name="Miaczynska M."/>
        </authorList>
    </citation>
    <scope>INTERACTION WITH APPL2 AND APPL1</scope>
</reference>
<reference key="12">
    <citation type="journal article" date="2012" name="Nat. Commun.">
        <title>Annexin A2 binds to endosomes following organelle destabilization by particulate wear debris.</title>
        <authorList>
            <person name="Scharf B."/>
            <person name="Clement C.C."/>
            <person name="Wu X.X."/>
            <person name="Morozova K."/>
            <person name="Zanolini D."/>
            <person name="Follenzi A."/>
            <person name="Larocca J.N."/>
            <person name="Levon K."/>
            <person name="Sutterwala F.S."/>
            <person name="Rand J."/>
            <person name="Cobelli N."/>
            <person name="Purdue E."/>
            <person name="Hajjar K.A."/>
            <person name="Santambrogio L."/>
        </authorList>
    </citation>
    <scope>FUNCTION</scope>
    <scope>DISRUPTION PHENOTYPE</scope>
</reference>
<reference key="13">
    <citation type="journal article" date="2012" name="PLoS ONE">
        <title>Annexin A2 is a natural extrahepatic inhibitor of the PCSK9-induced LDL receptor degradation.</title>
        <authorList>
            <person name="Seidah N.G."/>
            <person name="Poirier S."/>
            <person name="Denis M."/>
            <person name="Parker R."/>
            <person name="Miao B."/>
            <person name="Mapelli C."/>
            <person name="Prat A."/>
            <person name="Wassef H."/>
            <person name="Davignon J."/>
            <person name="Hajjar K.A."/>
            <person name="Mayer G."/>
        </authorList>
    </citation>
    <scope>FUNCTION</scope>
    <scope>DISRUPTION PHENOTYPE</scope>
</reference>
<reference key="14">
    <citation type="journal article" date="2013" name="Mol. Cell">
        <title>SIRT5-mediated lysine desuccinylation impacts diverse metabolic pathways.</title>
        <authorList>
            <person name="Park J."/>
            <person name="Chen Y."/>
            <person name="Tishkoff D.X."/>
            <person name="Peng C."/>
            <person name="Tan M."/>
            <person name="Dai L."/>
            <person name="Xie Z."/>
            <person name="Zhang Y."/>
            <person name="Zwaans B.M."/>
            <person name="Skinner M.E."/>
            <person name="Lombard D.B."/>
            <person name="Zhao Y."/>
        </authorList>
    </citation>
    <scope>ACETYLATION [LARGE SCALE ANALYSIS] AT LYS-49; LYS-152 AND LYS-227</scope>
    <scope>IDENTIFICATION BY MASS SPECTROMETRY [LARGE SCALE ANALYSIS]</scope>
    <source>
        <tissue>Embryonic fibroblast</tissue>
    </source>
</reference>
<reference key="15">
    <citation type="journal article" date="2015" name="J. Immunol.">
        <title>Annexin A2 Regulates Autophagy in Pseudomonas aeruginosa Infection through the Akt1-mTOR-ULK1/2 Signaling Pathway.</title>
        <authorList>
            <person name="Li R."/>
            <person name="Tan S."/>
            <person name="Yu M."/>
            <person name="Jundt M.C."/>
            <person name="Zhang S."/>
            <person name="Wu M."/>
        </authorList>
    </citation>
    <scope>FUNCTION (MICROBIAL INFECTION)</scope>
    <scope>INTERACTION WITH FAM13A</scope>
    <scope>DISRUPTION PHENOTYPE (MICROBIAL INFECTION)</scope>
</reference>
<reference key="16">
    <citation type="journal article" date="2015" name="Sci. Rep.">
        <title>Annexin A2 binds to endosomes and negatively regulates TLR4-triggered inflammatory responses via the TRAM-TRIF pathway.</title>
        <authorList>
            <person name="Zhang S."/>
            <person name="Yu M."/>
            <person name="Guo Q."/>
            <person name="Li R."/>
            <person name="Li G."/>
            <person name="Tan S."/>
            <person name="Li X."/>
            <person name="Wei Y."/>
            <person name="Wu M."/>
        </authorList>
    </citation>
    <scope>FUNCTION (MICROBIAL INFECTION)</scope>
    <scope>SUBCELLULAR LOCATION (MICROBIAL INFECTION)</scope>
</reference>
<reference key="17">
    <citation type="journal article" date="2016" name="Infect. Immun.">
        <title>The Tick Protein Sialostatin L2 Binds to Annexin A2 and Inhibits NLRC4-Mediated Inflammasome Activation.</title>
        <authorList>
            <person name="Wang X."/>
            <person name="Shaw D.K."/>
            <person name="Sakhon O.S."/>
            <person name="Snyder G.A."/>
            <person name="Sundberg E.J."/>
            <person name="Santambrogio L."/>
            <person name="Sutterwala F.S."/>
            <person name="Dumler J.S."/>
            <person name="Shirey K.A."/>
            <person name="Perkins D.J."/>
            <person name="Richard K."/>
            <person name="Chagas A.C."/>
            <person name="Calvo E."/>
            <person name="Kopecky J."/>
            <person name="Kotsyfakis M."/>
            <person name="Pedra J.H.F."/>
        </authorList>
    </citation>
    <scope>FUNCTION (MICROBIAL INFECTION)</scope>
    <scope>INTERACTION WITH TICK SALIVARY CYSTATIN-L2</scope>
    <scope>DISRUPTION PHENOTYPE (MICROBIAL INFECTION)</scope>
</reference>
<reference key="18">
    <citation type="journal article" date="2016" name="J. Immunol.">
        <title>The Membrane Phospholipid Binding Protein Annexin A2 Promotes Phagocytosis and Nonlytic Exocytosis of Cryptococcus neoformans and Impacts Survival in Fungal Infection.</title>
        <authorList>
            <person name="Stukes S."/>
            <person name="Coelho C."/>
            <person name="Rivera J."/>
            <person name="Jedlicka A.E."/>
            <person name="Hajjar K.A."/>
            <person name="Casadevall A."/>
        </authorList>
    </citation>
    <scope>FUNCTION (MICROBIAL INFECTION)</scope>
    <scope>DISRUPTION PHENOTYPE (MICROBIAL INFECTION)</scope>
</reference>
<feature type="initiator methionine" description="Removed" evidence="3">
    <location>
        <position position="1"/>
    </location>
</feature>
<feature type="chain" id="PRO_0000067471" description="Annexin A2">
    <location>
        <begin position="2"/>
        <end position="339"/>
    </location>
</feature>
<feature type="repeat" description="Annexin 1" evidence="7">
    <location>
        <begin position="33"/>
        <end position="104"/>
    </location>
</feature>
<feature type="repeat" description="Annexin 2" evidence="7">
    <location>
        <begin position="105"/>
        <end position="176"/>
    </location>
</feature>
<feature type="repeat" description="Annexin 3" evidence="7">
    <location>
        <begin position="189"/>
        <end position="261"/>
    </location>
</feature>
<feature type="repeat" description="Annexin 4" evidence="7">
    <location>
        <begin position="265"/>
        <end position="336"/>
    </location>
</feature>
<feature type="region of interest" description="S100A10-binding site" evidence="6">
    <location>
        <begin position="2"/>
        <end position="24"/>
    </location>
</feature>
<feature type="modified residue" description="N-acetylserine" evidence="3">
    <location>
        <position position="2"/>
    </location>
</feature>
<feature type="modified residue" description="Phosphotyrosine; by SRC" evidence="4">
    <location>
        <position position="24"/>
    </location>
</feature>
<feature type="modified residue" description="Phosphoserine; by PKC" evidence="4">
    <location>
        <position position="26"/>
    </location>
</feature>
<feature type="modified residue" description="N6-acetyllysine; alternate" evidence="23">
    <location>
        <position position="49"/>
    </location>
</feature>
<feature type="modified residue" description="N6-acetyllysine" evidence="23">
    <location>
        <position position="152"/>
    </location>
</feature>
<feature type="modified residue" description="Phosphoserine" evidence="4">
    <location>
        <position position="184"/>
    </location>
</feature>
<feature type="modified residue" description="Phosphotyrosine" evidence="22">
    <location>
        <position position="199"/>
    </location>
</feature>
<feature type="modified residue" description="N6-acetyllysine" evidence="23">
    <location>
        <position position="227"/>
    </location>
</feature>
<feature type="cross-link" description="Glycyl lysine isopeptide (Lys-Gly) (interchain with G-Cter in SUMO1); alternate" evidence="4">
    <location>
        <position position="49"/>
    </location>
</feature>
<feature type="cross-link" description="Glycyl lysine isopeptide (Lys-Gly) (interchain with G-Cter in SUMO2); alternate" evidence="4">
    <location>
        <position position="49"/>
    </location>
</feature>
<feature type="helix" evidence="24">
    <location>
        <begin position="4"/>
        <end position="8"/>
    </location>
</feature>
<feature type="helix" evidence="24">
    <location>
        <begin position="35"/>
        <end position="46"/>
    </location>
</feature>
<feature type="helix" evidence="24">
    <location>
        <begin position="53"/>
        <end position="61"/>
    </location>
</feature>
<feature type="helix" evidence="24">
    <location>
        <begin position="65"/>
        <end position="79"/>
    </location>
</feature>
<feature type="helix" evidence="24">
    <location>
        <begin position="83"/>
        <end position="90"/>
    </location>
</feature>
<feature type="helix" evidence="24">
    <location>
        <begin position="93"/>
        <end position="103"/>
    </location>
</feature>
<feature type="helix" evidence="24">
    <location>
        <begin position="106"/>
        <end position="118"/>
    </location>
</feature>
<feature type="helix" evidence="24">
    <location>
        <begin position="125"/>
        <end position="134"/>
    </location>
</feature>
<feature type="helix" evidence="24">
    <location>
        <begin position="137"/>
        <end position="151"/>
    </location>
</feature>
<feature type="helix" evidence="24">
    <location>
        <begin position="155"/>
        <end position="162"/>
    </location>
</feature>
<feature type="helix" evidence="24">
    <location>
        <begin position="165"/>
        <end position="175"/>
    </location>
</feature>
<feature type="helix" evidence="24">
    <location>
        <begin position="188"/>
        <end position="201"/>
    </location>
</feature>
<feature type="strand" evidence="24">
    <location>
        <begin position="204"/>
        <end position="207"/>
    </location>
</feature>
<feature type="helix" evidence="24">
    <location>
        <begin position="210"/>
        <end position="219"/>
    </location>
</feature>
<feature type="helix" evidence="24">
    <location>
        <begin position="222"/>
        <end position="235"/>
    </location>
</feature>
<feature type="helix" evidence="24">
    <location>
        <begin position="240"/>
        <end position="247"/>
    </location>
</feature>
<feature type="helix" evidence="24">
    <location>
        <begin position="251"/>
        <end position="264"/>
    </location>
</feature>
<feature type="helix" evidence="24">
    <location>
        <begin position="266"/>
        <end position="278"/>
    </location>
</feature>
<feature type="strand" evidence="24">
    <location>
        <begin position="279"/>
        <end position="282"/>
    </location>
</feature>
<feature type="helix" evidence="24">
    <location>
        <begin position="285"/>
        <end position="294"/>
    </location>
</feature>
<feature type="turn" evidence="24">
    <location>
        <begin position="296"/>
        <end position="299"/>
    </location>
</feature>
<feature type="helix" evidence="24">
    <location>
        <begin position="300"/>
        <end position="311"/>
    </location>
</feature>
<feature type="helix" evidence="24">
    <location>
        <begin position="315"/>
        <end position="322"/>
    </location>
</feature>
<feature type="helix" evidence="24">
    <location>
        <begin position="325"/>
        <end position="335"/>
    </location>
</feature>
<gene>
    <name type="primary">Anxa2</name>
    <name type="synonym">Anx2</name>
    <name type="synonym">Cal1h</name>
</gene>
<organism>
    <name type="scientific">Mus musculus</name>
    <name type="common">Mouse</name>
    <dbReference type="NCBI Taxonomy" id="10090"/>
    <lineage>
        <taxon>Eukaryota</taxon>
        <taxon>Metazoa</taxon>
        <taxon>Chordata</taxon>
        <taxon>Craniata</taxon>
        <taxon>Vertebrata</taxon>
        <taxon>Euteleostomi</taxon>
        <taxon>Mammalia</taxon>
        <taxon>Eutheria</taxon>
        <taxon>Euarchontoglires</taxon>
        <taxon>Glires</taxon>
        <taxon>Rodentia</taxon>
        <taxon>Myomorpha</taxon>
        <taxon>Muroidea</taxon>
        <taxon>Muridae</taxon>
        <taxon>Murinae</taxon>
        <taxon>Mus</taxon>
        <taxon>Mus</taxon>
    </lineage>
</organism>
<accession>P07356</accession>
<dbReference type="EMBL" id="M14044">
    <property type="protein sequence ID" value="AAA37360.1"/>
    <property type="molecule type" value="mRNA"/>
</dbReference>
<dbReference type="EMBL" id="BC003327">
    <property type="protein sequence ID" value="AAH03327.1"/>
    <property type="molecule type" value="mRNA"/>
</dbReference>
<dbReference type="EMBL" id="BC005763">
    <property type="protein sequence ID" value="AAH05763.1"/>
    <property type="molecule type" value="mRNA"/>
</dbReference>
<dbReference type="EMBL" id="M33321">
    <property type="protein sequence ID" value="AAA37361.1"/>
    <property type="molecule type" value="Genomic_DNA"/>
</dbReference>
<dbReference type="EMBL" id="M33322">
    <property type="protein sequence ID" value="AAA37362.1"/>
    <property type="molecule type" value="Genomic_DNA"/>
</dbReference>
<dbReference type="EMBL" id="D10024">
    <property type="protein sequence ID" value="BAA00914.1"/>
    <property type="molecule type" value="mRNA"/>
</dbReference>
<dbReference type="EMBL" id="S82177">
    <property type="status" value="NOT_ANNOTATED_CDS"/>
    <property type="molecule type" value="Genomic_DNA"/>
</dbReference>
<dbReference type="CCDS" id="CCDS23316.1"/>
<dbReference type="PIR" id="A23943">
    <property type="entry name" value="LUMS36"/>
</dbReference>
<dbReference type="RefSeq" id="NP_001396506.1">
    <property type="nucleotide sequence ID" value="NM_001409577.1"/>
</dbReference>
<dbReference type="RefSeq" id="NP_031611.1">
    <property type="nucleotide sequence ID" value="NM_007585.4"/>
</dbReference>
<dbReference type="RefSeq" id="XP_006510859.1">
    <property type="nucleotide sequence ID" value="XM_006510796.2"/>
</dbReference>
<dbReference type="PDB" id="4HRE">
    <property type="method" value="X-ray"/>
    <property type="resolution" value="2.79 A"/>
    <property type="chains" value="A/B/C/D=1-339"/>
</dbReference>
<dbReference type="PDBsum" id="4HRE"/>
<dbReference type="SMR" id="P07356"/>
<dbReference type="BioGRID" id="198448">
    <property type="interactions" value="46"/>
</dbReference>
<dbReference type="ComplexPortal" id="CPX-141">
    <property type="entry name" value="ANXA2-PCSK9 complex"/>
</dbReference>
<dbReference type="ComplexPortal" id="CPX-898">
    <property type="entry name" value="Annexin A2 - S100-A10 complex"/>
</dbReference>
<dbReference type="ComplexPortal" id="CPX-899">
    <property type="entry name" value="SMARCA3 - Annexin A2 - S100-A10 complex"/>
</dbReference>
<dbReference type="ComplexPortal" id="CPX-905">
    <property type="entry name" value="AHNAK - Annexin A2 - S100-A10 complex"/>
</dbReference>
<dbReference type="CORUM" id="P07356"/>
<dbReference type="FunCoup" id="P07356">
    <property type="interactions" value="727"/>
</dbReference>
<dbReference type="IntAct" id="P07356">
    <property type="interactions" value="23"/>
</dbReference>
<dbReference type="MINT" id="P07356"/>
<dbReference type="STRING" id="10090.ENSMUSP00000034756"/>
<dbReference type="TCDB" id="9.A.48.1.1">
    <property type="family name" value="the unconventional protein secretion (ups) system family"/>
</dbReference>
<dbReference type="GlyGen" id="P07356">
    <property type="glycosylation" value="1 site, 1 O-linked glycan (1 site)"/>
</dbReference>
<dbReference type="iPTMnet" id="P07356"/>
<dbReference type="PhosphoSitePlus" id="P07356"/>
<dbReference type="SwissPalm" id="P07356"/>
<dbReference type="REPRODUCTION-2DPAGE" id="IPI00468203"/>
<dbReference type="REPRODUCTION-2DPAGE" id="P07356"/>
<dbReference type="CPTAC" id="non-CPTAC-3634"/>
<dbReference type="jPOST" id="P07356"/>
<dbReference type="PaxDb" id="10090-ENSMUSP00000034756"/>
<dbReference type="PeptideAtlas" id="P07356"/>
<dbReference type="ProteomicsDB" id="281892"/>
<dbReference type="Antibodypedia" id="3808">
    <property type="antibodies" value="880 antibodies from 46 providers"/>
</dbReference>
<dbReference type="DNASU" id="12306"/>
<dbReference type="Ensembl" id="ENSMUST00000034756.15">
    <property type="protein sequence ID" value="ENSMUSP00000034756.9"/>
    <property type="gene ID" value="ENSMUSG00000032231.15"/>
</dbReference>
<dbReference type="GeneID" id="12306"/>
<dbReference type="KEGG" id="mmu:12306"/>
<dbReference type="UCSC" id="uc009qng.1">
    <property type="organism name" value="mouse"/>
</dbReference>
<dbReference type="AGR" id="MGI:88246"/>
<dbReference type="CTD" id="302"/>
<dbReference type="MGI" id="MGI:88246">
    <property type="gene designation" value="Anxa2"/>
</dbReference>
<dbReference type="VEuPathDB" id="HostDB:ENSMUSG00000032231"/>
<dbReference type="eggNOG" id="KOG0819">
    <property type="taxonomic scope" value="Eukaryota"/>
</dbReference>
<dbReference type="GeneTree" id="ENSGT00940000154257"/>
<dbReference type="HOGENOM" id="CLU_025300_0_0_1"/>
<dbReference type="InParanoid" id="P07356"/>
<dbReference type="OMA" id="DLMRIRT"/>
<dbReference type="OrthoDB" id="37886at2759"/>
<dbReference type="PhylomeDB" id="P07356"/>
<dbReference type="TreeFam" id="TF105452"/>
<dbReference type="Reactome" id="R-MMU-6798695">
    <property type="pathway name" value="Neutrophil degranulation"/>
</dbReference>
<dbReference type="Reactome" id="R-MMU-75205">
    <property type="pathway name" value="Dissolution of Fibrin Clot"/>
</dbReference>
<dbReference type="Reactome" id="R-MMU-9860927">
    <property type="pathway name" value="Turbulent (oscillatory, disturbed) flow shear stress activates signaling by PIEZO1 and integrins in endothelial cells"/>
</dbReference>
<dbReference type="BioGRID-ORCS" id="12306">
    <property type="hits" value="2 hits in 84 CRISPR screens"/>
</dbReference>
<dbReference type="ChiTaRS" id="Anxa2">
    <property type="organism name" value="mouse"/>
</dbReference>
<dbReference type="EvolutionaryTrace" id="P07356"/>
<dbReference type="PRO" id="PR:P07356"/>
<dbReference type="Proteomes" id="UP000000589">
    <property type="component" value="Chromosome 9"/>
</dbReference>
<dbReference type="RNAct" id="P07356">
    <property type="molecule type" value="protein"/>
</dbReference>
<dbReference type="Bgee" id="ENSMUSG00000032231">
    <property type="expression patterns" value="Expressed in substantia propria of cornea and 260 other cell types or tissues"/>
</dbReference>
<dbReference type="ExpressionAtlas" id="P07356">
    <property type="expression patterns" value="baseline and differential"/>
</dbReference>
<dbReference type="GO" id="GO:1990665">
    <property type="term" value="C:AnxA2-p11 complex"/>
    <property type="evidence" value="ECO:0007669"/>
    <property type="project" value="Ensembl"/>
</dbReference>
<dbReference type="GO" id="GO:0005604">
    <property type="term" value="C:basement membrane"/>
    <property type="evidence" value="ECO:0007669"/>
    <property type="project" value="UniProtKB-SubCell"/>
</dbReference>
<dbReference type="GO" id="GO:0016323">
    <property type="term" value="C:basolateral plasma membrane"/>
    <property type="evidence" value="ECO:0000314"/>
    <property type="project" value="BHF-UCL"/>
</dbReference>
<dbReference type="GO" id="GO:0009986">
    <property type="term" value="C:cell surface"/>
    <property type="evidence" value="ECO:0000314"/>
    <property type="project" value="MGI"/>
</dbReference>
<dbReference type="GO" id="GO:0062023">
    <property type="term" value="C:collagen-containing extracellular matrix"/>
    <property type="evidence" value="ECO:0007005"/>
    <property type="project" value="BHF-UCL"/>
</dbReference>
<dbReference type="GO" id="GO:0001533">
    <property type="term" value="C:cornified envelope"/>
    <property type="evidence" value="ECO:0000314"/>
    <property type="project" value="MGI"/>
</dbReference>
<dbReference type="GO" id="GO:0005737">
    <property type="term" value="C:cytoplasm"/>
    <property type="evidence" value="ECO:0000314"/>
    <property type="project" value="MGI"/>
</dbReference>
<dbReference type="GO" id="GO:0005829">
    <property type="term" value="C:cytosol"/>
    <property type="evidence" value="ECO:0000314"/>
    <property type="project" value="MGI"/>
</dbReference>
<dbReference type="GO" id="GO:0005769">
    <property type="term" value="C:early endosome"/>
    <property type="evidence" value="ECO:0000314"/>
    <property type="project" value="MGI"/>
</dbReference>
<dbReference type="GO" id="GO:0070062">
    <property type="term" value="C:extracellular exosome"/>
    <property type="evidence" value="ECO:0007669"/>
    <property type="project" value="Ensembl"/>
</dbReference>
<dbReference type="GO" id="GO:0005615">
    <property type="term" value="C:extracellular space"/>
    <property type="evidence" value="ECO:0007005"/>
    <property type="project" value="BHF-UCL"/>
</dbReference>
<dbReference type="GO" id="GO:0031902">
    <property type="term" value="C:late endosome membrane"/>
    <property type="evidence" value="ECO:0007669"/>
    <property type="project" value="Ensembl"/>
</dbReference>
<dbReference type="GO" id="GO:0005811">
    <property type="term" value="C:lipid droplet"/>
    <property type="evidence" value="ECO:0007669"/>
    <property type="project" value="Ensembl"/>
</dbReference>
<dbReference type="GO" id="GO:0005765">
    <property type="term" value="C:lysosomal membrane"/>
    <property type="evidence" value="ECO:0007669"/>
    <property type="project" value="Ensembl"/>
</dbReference>
<dbReference type="GO" id="GO:0042470">
    <property type="term" value="C:melanosome"/>
    <property type="evidence" value="ECO:0007669"/>
    <property type="project" value="UniProtKB-SubCell"/>
</dbReference>
<dbReference type="GO" id="GO:0016020">
    <property type="term" value="C:membrane"/>
    <property type="evidence" value="ECO:0000266"/>
    <property type="project" value="MGI"/>
</dbReference>
<dbReference type="GO" id="GO:0045121">
    <property type="term" value="C:membrane raft"/>
    <property type="evidence" value="ECO:0007669"/>
    <property type="project" value="Ensembl"/>
</dbReference>
<dbReference type="GO" id="GO:0030496">
    <property type="term" value="C:midbody"/>
    <property type="evidence" value="ECO:0007669"/>
    <property type="project" value="Ensembl"/>
</dbReference>
<dbReference type="GO" id="GO:0035749">
    <property type="term" value="C:myelin sheath adaxonal region"/>
    <property type="evidence" value="ECO:0000314"/>
    <property type="project" value="BHF-UCL"/>
</dbReference>
<dbReference type="GO" id="GO:0016363">
    <property type="term" value="C:nuclear matrix"/>
    <property type="evidence" value="ECO:0000303"/>
    <property type="project" value="ComplexPortal"/>
</dbReference>
<dbReference type="GO" id="GO:1990667">
    <property type="term" value="C:PCSK9-AnxA2 complex"/>
    <property type="evidence" value="ECO:0000250"/>
    <property type="project" value="BHF-UCL"/>
</dbReference>
<dbReference type="GO" id="GO:0005886">
    <property type="term" value="C:plasma membrane"/>
    <property type="evidence" value="ECO:0000314"/>
    <property type="project" value="ComplexPortal"/>
</dbReference>
<dbReference type="GO" id="GO:0098797">
    <property type="term" value="C:plasma membrane protein complex"/>
    <property type="evidence" value="ECO:0000353"/>
    <property type="project" value="ComplexPortal"/>
</dbReference>
<dbReference type="GO" id="GO:0090575">
    <property type="term" value="C:RNA polymerase II transcription regulator complex"/>
    <property type="evidence" value="ECO:0000353"/>
    <property type="project" value="ComplexPortal"/>
</dbReference>
<dbReference type="GO" id="GO:0042383">
    <property type="term" value="C:sarcolemma"/>
    <property type="evidence" value="ECO:0000314"/>
    <property type="project" value="MGI"/>
</dbReference>
<dbReference type="GO" id="GO:0043220">
    <property type="term" value="C:Schmidt-Lanterman incisure"/>
    <property type="evidence" value="ECO:0000314"/>
    <property type="project" value="BHF-UCL"/>
</dbReference>
<dbReference type="GO" id="GO:0005509">
    <property type="term" value="F:calcium ion binding"/>
    <property type="evidence" value="ECO:0007669"/>
    <property type="project" value="InterPro"/>
</dbReference>
<dbReference type="GO" id="GO:0005544">
    <property type="term" value="F:calcium-dependent phospholipid binding"/>
    <property type="evidence" value="ECO:0007669"/>
    <property type="project" value="UniProtKB-KW"/>
</dbReference>
<dbReference type="GO" id="GO:0048306">
    <property type="term" value="F:calcium-dependent protein binding"/>
    <property type="evidence" value="ECO:0007669"/>
    <property type="project" value="Ensembl"/>
</dbReference>
<dbReference type="GO" id="GO:0008092">
    <property type="term" value="F:cytoskeletal protein binding"/>
    <property type="evidence" value="ECO:0007669"/>
    <property type="project" value="InterPro"/>
</dbReference>
<dbReference type="GO" id="GO:0042802">
    <property type="term" value="F:identical protein binding"/>
    <property type="evidence" value="ECO:0007669"/>
    <property type="project" value="Ensembl"/>
</dbReference>
<dbReference type="GO" id="GO:0005546">
    <property type="term" value="F:phosphatidylinositol-4,5-bisphosphate binding"/>
    <property type="evidence" value="ECO:0007669"/>
    <property type="project" value="Ensembl"/>
</dbReference>
<dbReference type="GO" id="GO:0019834">
    <property type="term" value="F:phospholipase A2 inhibitor activity"/>
    <property type="evidence" value="ECO:0007669"/>
    <property type="project" value="Ensembl"/>
</dbReference>
<dbReference type="GO" id="GO:0002020">
    <property type="term" value="F:protease binding"/>
    <property type="evidence" value="ECO:0007669"/>
    <property type="project" value="Ensembl"/>
</dbReference>
<dbReference type="GO" id="GO:0044548">
    <property type="term" value="F:S100 protein binding"/>
    <property type="evidence" value="ECO:0007669"/>
    <property type="project" value="Ensembl"/>
</dbReference>
<dbReference type="GO" id="GO:0004867">
    <property type="term" value="F:serine-type endopeptidase inhibitor activity"/>
    <property type="evidence" value="ECO:0007669"/>
    <property type="project" value="Ensembl"/>
</dbReference>
<dbReference type="GO" id="GO:0001525">
    <property type="term" value="P:angiogenesis"/>
    <property type="evidence" value="ECO:0000315"/>
    <property type="project" value="MGI"/>
</dbReference>
<dbReference type="GO" id="GO:0007155">
    <property type="term" value="P:cell adhesion"/>
    <property type="evidence" value="ECO:0000315"/>
    <property type="project" value="MGI"/>
</dbReference>
<dbReference type="GO" id="GO:0007160">
    <property type="term" value="P:cell-matrix adhesion"/>
    <property type="evidence" value="ECO:0000315"/>
    <property type="project" value="MGI"/>
</dbReference>
<dbReference type="GO" id="GO:0030199">
    <property type="term" value="P:collagen fibril organization"/>
    <property type="evidence" value="ECO:0000315"/>
    <property type="project" value="MGI"/>
</dbReference>
<dbReference type="GO" id="GO:1904019">
    <property type="term" value="P:epithelial cell apoptotic process"/>
    <property type="evidence" value="ECO:0000315"/>
    <property type="project" value="MGI"/>
</dbReference>
<dbReference type="GO" id="GO:0042730">
    <property type="term" value="P:fibrinolysis"/>
    <property type="evidence" value="ECO:0000315"/>
    <property type="project" value="MGI"/>
</dbReference>
<dbReference type="GO" id="GO:0030324">
    <property type="term" value="P:lung development"/>
    <property type="evidence" value="ECO:0000315"/>
    <property type="project" value="MGI"/>
</dbReference>
<dbReference type="GO" id="GO:0001765">
    <property type="term" value="P:membrane raft assembly"/>
    <property type="evidence" value="ECO:0007669"/>
    <property type="project" value="Ensembl"/>
</dbReference>
<dbReference type="GO" id="GO:0042789">
    <property type="term" value="P:mRNA transcription by RNA polymerase II"/>
    <property type="evidence" value="ECO:0000314"/>
    <property type="project" value="ComplexPortal"/>
</dbReference>
<dbReference type="GO" id="GO:0032804">
    <property type="term" value="P:negative regulation of low-density lipoprotein particle receptor catabolic process"/>
    <property type="evidence" value="ECO:0000315"/>
    <property type="project" value="BHF-UCL"/>
</dbReference>
<dbReference type="GO" id="GO:0002091">
    <property type="term" value="P:negative regulation of receptor internalization"/>
    <property type="evidence" value="ECO:0000266"/>
    <property type="project" value="ComplexPortal"/>
</dbReference>
<dbReference type="GO" id="GO:0036035">
    <property type="term" value="P:osteoclast development"/>
    <property type="evidence" value="ECO:0007669"/>
    <property type="project" value="Ensembl"/>
</dbReference>
<dbReference type="GO" id="GO:0045921">
    <property type="term" value="P:positive regulation of exocytosis"/>
    <property type="evidence" value="ECO:0000303"/>
    <property type="project" value="ComplexPortal"/>
</dbReference>
<dbReference type="GO" id="GO:1905581">
    <property type="term" value="P:positive regulation of low-density lipoprotein particle clearance"/>
    <property type="evidence" value="ECO:0000315"/>
    <property type="project" value="BHF-UCL"/>
</dbReference>
<dbReference type="GO" id="GO:1905686">
    <property type="term" value="P:positive regulation of plasma membrane repair"/>
    <property type="evidence" value="ECO:0000303"/>
    <property type="project" value="ComplexPortal"/>
</dbReference>
<dbReference type="GO" id="GO:0010756">
    <property type="term" value="P:positive regulation of plasminogen activation"/>
    <property type="evidence" value="ECO:0000266"/>
    <property type="project" value="ComplexPortal"/>
</dbReference>
<dbReference type="GO" id="GO:0001921">
    <property type="term" value="P:positive regulation of receptor recycling"/>
    <property type="evidence" value="ECO:0000315"/>
    <property type="project" value="BHF-UCL"/>
</dbReference>
<dbReference type="GO" id="GO:1905602">
    <property type="term" value="P:positive regulation of receptor-mediated endocytosis involved in cholesterol transport"/>
    <property type="evidence" value="ECO:0000315"/>
    <property type="project" value="BHF-UCL"/>
</dbReference>
<dbReference type="GO" id="GO:0045944">
    <property type="term" value="P:positive regulation of transcription by RNA polymerase II"/>
    <property type="evidence" value="ECO:0000314"/>
    <property type="project" value="ComplexPortal"/>
</dbReference>
<dbReference type="GO" id="GO:0044090">
    <property type="term" value="P:positive regulation of vacuole organization"/>
    <property type="evidence" value="ECO:0007669"/>
    <property type="project" value="Ensembl"/>
</dbReference>
<dbReference type="GO" id="GO:0031340">
    <property type="term" value="P:positive regulation of vesicle fusion"/>
    <property type="evidence" value="ECO:0007669"/>
    <property type="project" value="Ensembl"/>
</dbReference>
<dbReference type="GO" id="GO:0050767">
    <property type="term" value="P:regulation of neurogenesis"/>
    <property type="evidence" value="ECO:0000314"/>
    <property type="project" value="ComplexPortal"/>
</dbReference>
<dbReference type="GO" id="GO:0014823">
    <property type="term" value="P:response to activity"/>
    <property type="evidence" value="ECO:0000315"/>
    <property type="project" value="MGI"/>
</dbReference>
<dbReference type="GO" id="GO:0006900">
    <property type="term" value="P:vesicle budding from membrane"/>
    <property type="evidence" value="ECO:0007669"/>
    <property type="project" value="Ensembl"/>
</dbReference>
<dbReference type="FunFam" id="1.10.220.10:FF:000001">
    <property type="entry name" value="Annexin"/>
    <property type="match status" value="1"/>
</dbReference>
<dbReference type="FunFam" id="1.10.220.10:FF:000002">
    <property type="entry name" value="Annexin"/>
    <property type="match status" value="1"/>
</dbReference>
<dbReference type="FunFam" id="1.10.220.10:FF:000003">
    <property type="entry name" value="Annexin"/>
    <property type="match status" value="1"/>
</dbReference>
<dbReference type="FunFam" id="1.10.220.10:FF:000007">
    <property type="entry name" value="Annexin"/>
    <property type="match status" value="1"/>
</dbReference>
<dbReference type="Gene3D" id="1.10.220.10">
    <property type="entry name" value="Annexin"/>
    <property type="match status" value="4"/>
</dbReference>
<dbReference type="InterPro" id="IPR001464">
    <property type="entry name" value="Annexin"/>
</dbReference>
<dbReference type="InterPro" id="IPR018502">
    <property type="entry name" value="Annexin_repeat"/>
</dbReference>
<dbReference type="InterPro" id="IPR018252">
    <property type="entry name" value="Annexin_repeat_CS"/>
</dbReference>
<dbReference type="InterPro" id="IPR037104">
    <property type="entry name" value="Annexin_sf"/>
</dbReference>
<dbReference type="InterPro" id="IPR002389">
    <property type="entry name" value="ANX2"/>
</dbReference>
<dbReference type="PANTHER" id="PTHR10502">
    <property type="entry name" value="ANNEXIN"/>
    <property type="match status" value="1"/>
</dbReference>
<dbReference type="PANTHER" id="PTHR10502:SF18">
    <property type="entry name" value="ANNEXIN A2-RELATED"/>
    <property type="match status" value="1"/>
</dbReference>
<dbReference type="Pfam" id="PF00191">
    <property type="entry name" value="Annexin"/>
    <property type="match status" value="4"/>
</dbReference>
<dbReference type="PRINTS" id="PR00196">
    <property type="entry name" value="ANNEXIN"/>
</dbReference>
<dbReference type="PRINTS" id="PR00198">
    <property type="entry name" value="ANNEXINII"/>
</dbReference>
<dbReference type="SMART" id="SM00335">
    <property type="entry name" value="ANX"/>
    <property type="match status" value="4"/>
</dbReference>
<dbReference type="SUPFAM" id="SSF47874">
    <property type="entry name" value="Annexin"/>
    <property type="match status" value="1"/>
</dbReference>
<dbReference type="PROSITE" id="PS00223">
    <property type="entry name" value="ANNEXIN_1"/>
    <property type="match status" value="4"/>
</dbReference>
<dbReference type="PROSITE" id="PS51897">
    <property type="entry name" value="ANNEXIN_2"/>
    <property type="match status" value="4"/>
</dbReference>
<comment type="function">
    <text evidence="4 9 12 13">Calcium-regulated membrane-binding protein whose affinity for calcium is greatly enhanced by anionic phospholipids. It binds two calcium ions with high affinity. May be involved in heat-stress response (By similarity). Inhibits PCSK9-enhanced LDLR degradation, probably reduces PCSK9 protein levels via a translational mechanism but also competes with LDLR for binding with PCSK9 (PubMed:22848640). Binds to endosomes damaged by phagocytosis of particulate wear debris and participates in endosomal membrane stabilization, thereby limiting NLRP3 inflammasome activation (PubMed:22453828). Required for endothelial cell surface plasmin generation and may support fibrinolytic surveillance and neoangiogenesis (PubMed:14702107).</text>
</comment>
<comment type="function">
    <text evidence="16">(Microbial infection) Regulates the formation of the NLRC4 inflammasome triggered by Anaplasma phagocytophilum infection.</text>
</comment>
<comment type="function">
    <text evidence="15">(Microbial infection) Protects against Klebsiella pneumoniae infection (PubMed:26527544). Attenuates bacteria-induced pulmonary inflammation and promotes intro-abdominal pathogen clearance (PubMed:26527544). Promotes anti-inflammatory responses by facilitating TLR4 internalization and translocation into early endosomal membranes; this leads to activation of TRAM-dependent endosomal signaling and release of anti-inflammatory cytokines (PubMed:26527544).</text>
</comment>
<comment type="function">
    <text evidence="17">(Microbial infection) Promotes macrophage phagocytic efficiency towards Cryptococcus neoformans and ability to control fungal infection inside the cells.</text>
</comment>
<comment type="function">
    <text evidence="14">(Microbial infection) Contributes to protection against Pseudomonas aeruginosa infection by regulating autophagy via the AKT1-mTOR-ULK1/2 signaling pathway and activation of Rho GTPases via FAM13A-mediated mechanism.</text>
</comment>
<comment type="subunit">
    <text evidence="2 4 5 8 11 14 16">Heterotetramer containing 2 light chains of S100A10/p11 and 2 heavy chains of ANXA2/p36 (By similarity). Interacts with ATP1B1 (By similarity). Interacts with DYSF (PubMed:14506282). Interacts with COCH. Interacts (via repeat Annexin 1) with PCSK9 (via the C-terminal domain); the interaction inhibits the degradation of LDLR. Interacts with CEACAM1 (via the cytoplasmic domain); this interaction is regulated by phosphorylation of CEACAM1 (By similarity). Interacts with APPL2 and APPL1; targets APPL2 to endosomes and acting in parallel to RAB5A (PubMed:21645192). Interacts with S100A4 (By similarity). May interact with UBAP2 (By similarity). Interacts with PLEKHG4B; this interaction is required for PLEKHG4B localization to cell-cell adhesions (By similarity). Interacts with FAM13A (PubMed:26371245). Interacts with salivary cystatin-L2 (via loop 2) from the tick Ixodes scapularis; the interaction results in reduced activation of mouse NLRC4 inflammasome formation upon Anaplasma phagocytophilum infection (PubMed:27045038).</text>
</comment>
<comment type="interaction">
    <interactant intactId="EBI-738510">
        <id>P07356</id>
    </interactant>
    <interactant intactId="EBI-643986">
        <id>P08207</id>
        <label>S100a10</label>
    </interactant>
    <organismsDiffer>false</organismsDiffer>
    <experiments>2</experiments>
</comment>
<comment type="subcellular location">
    <subcellularLocation>
        <location>Secreted</location>
        <location>Extracellular space</location>
        <location>Extracellular matrix</location>
        <location>Basement membrane</location>
    </subcellularLocation>
    <subcellularLocation>
        <location evidence="1">Melanosome</location>
    </subcellularLocation>
    <text>In the lamina beneath the plasma membrane.</text>
</comment>
<comment type="subcellular location">
    <subcellularLocation>
        <location evidence="15">Early endosome</location>
    </subcellularLocation>
    <text evidence="15">(Microbial infection) In lipopolysaccharide (LPS)-triggered macrophages, aggregates as clusters along the cytoplasmic side of the membrane, shows substantially enhanced co-localization with TLR4 signalosome complex and gets recruited to early endosomes.</text>
</comment>
<comment type="domain">
    <text>A pair of annexin repeats may form one binding site for calcium and phospholipid.</text>
</comment>
<comment type="PTM">
    <text evidence="10">ISGylated.</text>
</comment>
<comment type="disruption phenotype">
    <text evidence="9 12 13">Animals show a 40% increase of LDL-cholesterol levels in plasma (PubMed:22848640). Increased NLRP3 inflammasome activation in dendritic cells following phagocytosis of wear debris particles (PubMed:22453828). Significantly higher levels of cross-linked fibrin in lung, spleen, small intestine, liver, heart and kidney from 2-month-old animals (PubMed:14702107). Impaired clearance of acute arterial thrombi in FeCl(3)-induced thrombosis model (PubMed:14702107). Reduced migration of endothelial cells through collagen I and fibrin matrices (PubMed:14702107). Reduced ability of endothelial cells to support t-PA/PLAT-dependent plasmin generation (PubMed:14702107). Reduced activity of metalloproteinases, such as MMP3 and MMP9 (PubMed:14702107). Impaired neovascular response (PubMed:14702107).</text>
</comment>
<comment type="disruption phenotype">
    <text evidence="16">(Microbial infection) Gene knockout results in increased susceptibility to Anaplasma phagocytophilum infection (PubMed:27045038). Macrophages from knockout mice secrete lower amounts of IL-1beta (IL1B) and IL18 following A.phagocytophilum infection (PubMed:27045038). Defects in caspase-1 (CASP1) activation and NLRC4 oligomerization following A.phagocytophilum infection (PubMed:27045038).</text>
</comment>
<comment type="disruption phenotype">
    <text evidence="17">(Microbial infection) Gene knockout results in reduced ability of macrophages to efficiently internalize Cryptococcus neoformans cells (PubMed:27371724). Increased lytic exocytosis and decreased non-lytic exocytosis of C.neoformans cells from macrophages (PubMed:27371724). Lower levels of reactive oxygen species (ROS) production in macrophages (PubMed:27371724). Reduced accumulation of autophagy marker LC3/MAP1LC3B in phagosomes around individual internalized fungal cells in macrophages (PubMed:27371724). Increased inflammation in the tissues and accumulation of fungal cells with larger capsule sizes following intratracheal infection with C.neoformans (PubMed:27371724). Decreased survival of animals infected with C.neoformans (PubMed:27371724).</text>
</comment>
<comment type="disruption phenotype">
    <text evidence="14">(Microbial infection) Gene knockout results in increased susceptibility to Pseudomonas aeruginosa infection (PubMed:26371245). Increased oxidation, lung injury and inflammatory response following P.aeruginosa infection (PubMed:26371245). Impaired P.aeruginosa-induced autophagy in alveolar macrophages (PubMed:26371245). Reduced expression of FAM13A following P.aeruginosa infection (PubMed:26371245). No significant effect on bacterial phagocytosis by alveolar macrophages (PubMed:26371245).</text>
</comment>
<comment type="miscellaneous">
    <text>It may cross-link plasma membrane phospholipids with actin and the cytoskeleton and be involved with exocytosis.</text>
</comment>
<comment type="similarity">
    <text evidence="7 21">Belongs to the annexin family.</text>
</comment>
<comment type="online information" name="Protein Spotlight">
    <link uri="https://www.proteinspotlight.org/back_issues/086"/>
    <text>Red velvet - Issue 86 of September 2007</text>
</comment>
<keyword id="KW-0002">3D-structure</keyword>
<keyword id="KW-0007">Acetylation</keyword>
<keyword id="KW-0041">Annexin</keyword>
<keyword id="KW-0084">Basement membrane</keyword>
<keyword id="KW-0106">Calcium</keyword>
<keyword id="KW-0111">Calcium/phospholipid-binding</keyword>
<keyword id="KW-0967">Endosome</keyword>
<keyword id="KW-0272">Extracellular matrix</keyword>
<keyword id="KW-1017">Isopeptide bond</keyword>
<keyword id="KW-0597">Phosphoprotein</keyword>
<keyword id="KW-1185">Reference proteome</keyword>
<keyword id="KW-0677">Repeat</keyword>
<keyword id="KW-0964">Secreted</keyword>
<keyword id="KW-0832">Ubl conjugation</keyword>
<evidence type="ECO:0000250" key="1"/>
<evidence type="ECO:0000250" key="2">
    <source>
        <dbReference type="UniProtKB" id="A2SW69"/>
    </source>
</evidence>
<evidence type="ECO:0000250" key="3">
    <source>
        <dbReference type="UniProtKB" id="P04272"/>
    </source>
</evidence>
<evidence type="ECO:0000250" key="4">
    <source>
        <dbReference type="UniProtKB" id="P07355"/>
    </source>
</evidence>
<evidence type="ECO:0000250" key="5">
    <source>
        <dbReference type="UniProtKB" id="Q6TEQ7"/>
    </source>
</evidence>
<evidence type="ECO:0000255" key="6"/>
<evidence type="ECO:0000255" key="7">
    <source>
        <dbReference type="PROSITE-ProRule" id="PRU01245"/>
    </source>
</evidence>
<evidence type="ECO:0000269" key="8">
    <source>
    </source>
</evidence>
<evidence type="ECO:0000269" key="9">
    <source>
    </source>
</evidence>
<evidence type="ECO:0000269" key="10">
    <source>
    </source>
</evidence>
<evidence type="ECO:0000269" key="11">
    <source>
    </source>
</evidence>
<evidence type="ECO:0000269" key="12">
    <source>
    </source>
</evidence>
<evidence type="ECO:0000269" key="13">
    <source>
    </source>
</evidence>
<evidence type="ECO:0000269" key="14">
    <source>
    </source>
</evidence>
<evidence type="ECO:0000269" key="15">
    <source>
    </source>
</evidence>
<evidence type="ECO:0000269" key="16">
    <source>
    </source>
</evidence>
<evidence type="ECO:0000269" key="17">
    <source>
    </source>
</evidence>
<evidence type="ECO:0000303" key="18">
    <source>
    </source>
</evidence>
<evidence type="ECO:0000303" key="19">
    <source>
    </source>
</evidence>
<evidence type="ECO:0000303" key="20">
    <source>
    </source>
</evidence>
<evidence type="ECO:0000305" key="21"/>
<evidence type="ECO:0007744" key="22">
    <source>
    </source>
</evidence>
<evidence type="ECO:0007744" key="23">
    <source>
    </source>
</evidence>
<evidence type="ECO:0007829" key="24">
    <source>
        <dbReference type="PDB" id="4HRE"/>
    </source>
</evidence>